<feature type="chain" id="PRO_0000101790" description="Disintegrin crotatroxin" evidence="5 6">
    <location>
        <begin position="1"/>
        <end position="72"/>
    </location>
</feature>
<feature type="chain" id="PRO_0000344503" description="Disintegrin crotatroxin-2" evidence="4 5">
    <location>
        <begin position="2"/>
        <end position="72"/>
    </location>
</feature>
<feature type="chain" id="PRO_0000407582" description="Disintegrin crotatroxin-4" evidence="5">
    <location>
        <begin position="4"/>
        <end position="72"/>
    </location>
</feature>
<feature type="chain" id="PRO_0000407583" description="Disintegrin crotatroxin-5" evidence="5">
    <location>
        <begin position="5"/>
        <end position="70"/>
    </location>
</feature>
<feature type="domain" description="Disintegrin" evidence="3">
    <location>
        <begin position="1"/>
        <end position="72"/>
    </location>
</feature>
<feature type="short sequence motif" description="Cell attachment site">
    <location>
        <begin position="50"/>
        <end position="52"/>
    </location>
</feature>
<feature type="disulfide bond" evidence="2">
    <location>
        <begin position="5"/>
        <end position="20"/>
    </location>
</feature>
<feature type="disulfide bond" evidence="2">
    <location>
        <begin position="7"/>
        <end position="15"/>
    </location>
</feature>
<feature type="disulfide bond" evidence="2">
    <location>
        <begin position="14"/>
        <end position="37"/>
    </location>
</feature>
<feature type="disulfide bond" evidence="2">
    <location>
        <begin position="28"/>
        <end position="34"/>
    </location>
</feature>
<feature type="disulfide bond" evidence="2">
    <location>
        <begin position="33"/>
        <end position="58"/>
    </location>
</feature>
<feature type="disulfide bond" evidence="2 3">
    <location>
        <begin position="46"/>
        <end position="65"/>
    </location>
</feature>
<comment type="function">
    <molecule>Disintegrin crotatroxin</molecule>
    <text>Inhibits fibrinogen interaction with platelets. Acts by binding to the alpha-IIb/beta-3 (ITGA2B/ITGB3) on the platelet surface and inhibits aggregation induced by ADP, thrombin, platelet-activating factor and collagen.</text>
</comment>
<comment type="function">
    <molecule>Disintegrin crotatroxin-2</molecule>
    <text>Inhibits ADP-induced platelet aggregation (IC(50) = 17.5nM), cancer cell migration in vitro, and experimental lung tumor colonization of cancer cells.</text>
</comment>
<comment type="subunit">
    <text evidence="1">Monomer.</text>
</comment>
<comment type="subcellular location">
    <subcellularLocation>
        <location evidence="4 5 6">Secreted</location>
    </subcellularLocation>
</comment>
<comment type="tissue specificity">
    <text evidence="10 11 12">Expressed by the venom gland.</text>
</comment>
<comment type="mass spectrometry">
    <molecule>Disintegrin crotatroxin</molecule>
    <text>Average mass.</text>
</comment>
<comment type="mass spectrometry">
    <molecule>Disintegrin crotatroxin-2</molecule>
</comment>
<comment type="mass spectrometry">
    <molecule>Disintegrin crotatroxin-2</molecule>
    <text>Average mass.</text>
</comment>
<comment type="mass spectrometry">
    <molecule>Disintegrin crotatroxin-4</molecule>
    <text>Average mass.</text>
</comment>
<comment type="mass spectrometry">
    <molecule>Disintegrin crotatroxin-5</molecule>
    <text>Average mass.</text>
</comment>
<comment type="miscellaneous">
    <text>The disintegrin belongs to the medium disintegrin subfamily.</text>
</comment>
<comment type="similarity">
    <text evidence="9">Belongs to the venom metalloproteinase (M12B) family. P-II subfamily. P-IIa sub-subfamily.</text>
</comment>
<protein>
    <recommendedName>
        <fullName evidence="8">Disintegrin crotatroxin</fullName>
    </recommendedName>
    <alternativeName>
        <fullName>Platelet aggregation activation inhibitor</fullName>
    </alternativeName>
    <component>
        <recommendedName>
            <fullName evidence="7">Disintegrin crotatroxin-2</fullName>
        </recommendedName>
    </component>
    <component>
        <recommendedName>
            <fullName evidence="9">Disintegrin crotatroxin-4</fullName>
        </recommendedName>
    </component>
    <component>
        <recommendedName>
            <fullName evidence="9">Disintegrin crotatroxin-5</fullName>
        </recommendedName>
    </component>
</protein>
<dbReference type="PIR" id="B43019">
    <property type="entry name" value="B43019"/>
</dbReference>
<dbReference type="SMR" id="P68520"/>
<dbReference type="BRENDA" id="3.4.24.1">
    <property type="organism ID" value="1710"/>
</dbReference>
<dbReference type="GO" id="GO:0005576">
    <property type="term" value="C:extracellular region"/>
    <property type="evidence" value="ECO:0007669"/>
    <property type="project" value="UniProtKB-SubCell"/>
</dbReference>
<dbReference type="GO" id="GO:0005886">
    <property type="term" value="C:plasma membrane"/>
    <property type="evidence" value="ECO:0007669"/>
    <property type="project" value="TreeGrafter"/>
</dbReference>
<dbReference type="GO" id="GO:0090729">
    <property type="term" value="F:toxin activity"/>
    <property type="evidence" value="ECO:0007669"/>
    <property type="project" value="UniProtKB-KW"/>
</dbReference>
<dbReference type="FunFam" id="4.10.70.10:FF:000005">
    <property type="entry name" value="Zinc metalloproteinase/disintegrin"/>
    <property type="match status" value="1"/>
</dbReference>
<dbReference type="Gene3D" id="4.10.70.10">
    <property type="entry name" value="Disintegrin domain"/>
    <property type="match status" value="1"/>
</dbReference>
<dbReference type="InterPro" id="IPR018358">
    <property type="entry name" value="Disintegrin_CS"/>
</dbReference>
<dbReference type="InterPro" id="IPR001762">
    <property type="entry name" value="Disintegrin_dom"/>
</dbReference>
<dbReference type="InterPro" id="IPR036436">
    <property type="entry name" value="Disintegrin_dom_sf"/>
</dbReference>
<dbReference type="PANTHER" id="PTHR11905">
    <property type="entry name" value="ADAM A DISINTEGRIN AND METALLOPROTEASE DOMAIN"/>
    <property type="match status" value="1"/>
</dbReference>
<dbReference type="PANTHER" id="PTHR11905:SF32">
    <property type="entry name" value="DISINTEGRIN AND METALLOPROTEINASE DOMAIN-CONTAINING PROTEIN 28"/>
    <property type="match status" value="1"/>
</dbReference>
<dbReference type="Pfam" id="PF00200">
    <property type="entry name" value="Disintegrin"/>
    <property type="match status" value="1"/>
</dbReference>
<dbReference type="PRINTS" id="PR00289">
    <property type="entry name" value="DISINTEGRIN"/>
</dbReference>
<dbReference type="SMART" id="SM00050">
    <property type="entry name" value="DISIN"/>
    <property type="match status" value="1"/>
</dbReference>
<dbReference type="SUPFAM" id="SSF57552">
    <property type="entry name" value="Blood coagulation inhibitor (disintegrin)"/>
    <property type="match status" value="1"/>
</dbReference>
<dbReference type="PROSITE" id="PS00427">
    <property type="entry name" value="DISINTEGRIN_1"/>
    <property type="match status" value="1"/>
</dbReference>
<dbReference type="PROSITE" id="PS50214">
    <property type="entry name" value="DISINTEGRIN_2"/>
    <property type="match status" value="1"/>
</dbReference>
<proteinExistence type="evidence at protein level"/>
<sequence>AGEECDCGSPANPCCDAATCKLRPGAQCADGLCCDQCRFIKKGTVCRPARGDWNDDTCTGQSADCPRNGLYG</sequence>
<accession>P68520</accession>
<accession>P31980</accession>
<name>VM2IC_CROAT</name>
<reference key="1">
    <citation type="journal article" date="1993" name="J. Biol. Chem.">
        <title>Characterization of the integrin specificities of disintegrins isolated from American pit viper venoms.</title>
        <authorList>
            <person name="Scarborough R.M."/>
            <person name="Rose J.W."/>
            <person name="Naughton M.A."/>
            <person name="Phillips D.R."/>
            <person name="Nannizzi L."/>
            <person name="Arfsten A."/>
            <person name="Campbell A.M."/>
            <person name="Charo I.F."/>
        </authorList>
    </citation>
    <scope>PROTEIN SEQUENCE (DISINTEGRIN CROTATROXIN)</scope>
    <scope>FUNCTION</scope>
    <scope>SUBCELLULAR LOCATION</scope>
    <source>
        <tissue>Venom</tissue>
    </source>
</reference>
<reference key="2">
    <citation type="journal article" date="2008" name="Toxicon">
        <title>Inhibition of lung tumor colonization and cell migration with the disintegrin crotatroxin 2 isolated from the venom of Crotalus atrox.</title>
        <authorList>
            <person name="Galan J.A."/>
            <person name="Sanchez E.E."/>
            <person name="Rodriguez-Acosta A."/>
            <person name="Soto J.G."/>
            <person name="Bashir S."/>
            <person name="McLane M.A."/>
            <person name="Paquette-Straub C."/>
            <person name="Perez J.C."/>
        </authorList>
    </citation>
    <scope>PROTEIN SEQUENCE OF 2-72 (DISINTEGRIN CROTATROXIN-2)</scope>
    <scope>FUNCTION</scope>
    <scope>MASS SPECTROMETRY</scope>
    <scope>SUBCELLULAR LOCATION</scope>
    <source>
        <tissue>Venom</tissue>
    </source>
</reference>
<reference key="3">
    <citation type="journal article" date="2009" name="J. Proteome Res.">
        <title>Exploring the venom proteome of the western diamondback rattlesnake, Crotalus atrox, via snake venomics and combinatorial peptide ligand library approaches.</title>
        <authorList>
            <person name="Calvete J.J."/>
            <person name="Fasoli E."/>
            <person name="Sanz L."/>
            <person name="Boschetti E."/>
            <person name="Righetti P.G."/>
        </authorList>
    </citation>
    <scope>PROTEIN SEQUENCE OF 1-67 (DISINTEGRIN CROTATROXIN)</scope>
    <scope>PROTEIN SEQUENCE OF 2-67 (DISINTEGRIN CROTATROXIN-2)</scope>
    <scope>PROTEIN SEQUENCE OF 4-67 (DISINTEGRIN CROTATROXIN-4)</scope>
    <scope>PROTEIN SEQUENCE OF 5-67 (DISINTEGRIN CROTATROXIN-5)</scope>
    <scope>MASS SPECTROMETRY</scope>
    <scope>SUBCELLULAR LOCATION</scope>
    <source>
        <tissue>Venom</tissue>
    </source>
</reference>
<organism>
    <name type="scientific">Crotalus atrox</name>
    <name type="common">Western diamondback rattlesnake</name>
    <dbReference type="NCBI Taxonomy" id="8730"/>
    <lineage>
        <taxon>Eukaryota</taxon>
        <taxon>Metazoa</taxon>
        <taxon>Chordata</taxon>
        <taxon>Craniata</taxon>
        <taxon>Vertebrata</taxon>
        <taxon>Euteleostomi</taxon>
        <taxon>Lepidosauria</taxon>
        <taxon>Squamata</taxon>
        <taxon>Bifurcata</taxon>
        <taxon>Unidentata</taxon>
        <taxon>Episquamata</taxon>
        <taxon>Toxicofera</taxon>
        <taxon>Serpentes</taxon>
        <taxon>Colubroidea</taxon>
        <taxon>Viperidae</taxon>
        <taxon>Crotalinae</taxon>
        <taxon>Crotalus</taxon>
    </lineage>
</organism>
<keyword id="KW-1217">Cell adhesion impairing toxin</keyword>
<keyword id="KW-0903">Direct protein sequencing</keyword>
<keyword id="KW-1015">Disulfide bond</keyword>
<keyword id="KW-1199">Hemostasis impairing toxin</keyword>
<keyword id="KW-1201">Platelet aggregation inhibiting toxin</keyword>
<keyword id="KW-0964">Secreted</keyword>
<keyword id="KW-0800">Toxin</keyword>
<evidence type="ECO:0000250" key="1"/>
<evidence type="ECO:0000250" key="2">
    <source>
        <dbReference type="UniProtKB" id="Q0NZX5"/>
    </source>
</evidence>
<evidence type="ECO:0000255" key="3">
    <source>
        <dbReference type="PROSITE-ProRule" id="PRU00068"/>
    </source>
</evidence>
<evidence type="ECO:0000269" key="4">
    <source>
    </source>
</evidence>
<evidence type="ECO:0000269" key="5">
    <source>
    </source>
</evidence>
<evidence type="ECO:0000269" key="6">
    <source>
    </source>
</evidence>
<evidence type="ECO:0000303" key="7">
    <source>
    </source>
</evidence>
<evidence type="ECO:0000303" key="8">
    <source>
    </source>
</evidence>
<evidence type="ECO:0000305" key="9"/>
<evidence type="ECO:0000305" key="10">
    <source>
    </source>
</evidence>
<evidence type="ECO:0000305" key="11">
    <source>
    </source>
</evidence>
<evidence type="ECO:0000305" key="12">
    <source>
    </source>
</evidence>